<reference key="1">
    <citation type="submission" date="2005-07" db="EMBL/GenBank/DDBJ databases">
        <title>Form deprivation modulates proliferation of retinal neuroprogenitor cells in primate experimental myopia.</title>
        <authorList>
            <person name="Tkatchenko A.V."/>
            <person name="Walsh P.A."/>
            <person name="Tkatchenko T.V."/>
            <person name="Gustincich S."/>
            <person name="Raviola E."/>
        </authorList>
    </citation>
    <scope>NUCLEOTIDE SEQUENCE [MRNA]</scope>
</reference>
<evidence type="ECO:0000250" key="1">
    <source>
        <dbReference type="UniProtKB" id="O00483"/>
    </source>
</evidence>
<evidence type="ECO:0000250" key="2">
    <source>
        <dbReference type="UniProtKB" id="Q62425"/>
    </source>
</evidence>
<evidence type="ECO:0000305" key="3"/>
<protein>
    <recommendedName>
        <fullName>Cytochrome c oxidase subunit NDUFA4</fullName>
    </recommendedName>
</protein>
<proteinExistence type="inferred from homology"/>
<accession>Q3YAJ5</accession>
<gene>
    <name type="primary">NDUFA4</name>
</gene>
<dbReference type="EMBL" id="DQ148135">
    <property type="protein sequence ID" value="AAZ80997.1"/>
    <property type="molecule type" value="mRNA"/>
</dbReference>
<dbReference type="RefSeq" id="NP_001030601.1">
    <property type="nucleotide sequence ID" value="NM_001035524.1"/>
</dbReference>
<dbReference type="RefSeq" id="XP_014994365.1">
    <property type="nucleotide sequence ID" value="XM_015138879.1"/>
</dbReference>
<dbReference type="SMR" id="Q3YAJ5"/>
<dbReference type="FunCoup" id="Q3YAJ5">
    <property type="interactions" value="791"/>
</dbReference>
<dbReference type="STRING" id="9544.ENSMMUP00000027490"/>
<dbReference type="PaxDb" id="9544-ENSMMUP00000027490"/>
<dbReference type="Ensembl" id="ENSMMUT00000029381.4">
    <property type="protein sequence ID" value="ENSMMUP00000027490.2"/>
    <property type="gene ID" value="ENSMMUG00000020894.4"/>
</dbReference>
<dbReference type="GeneID" id="641333"/>
<dbReference type="KEGG" id="mcc:641333"/>
<dbReference type="CTD" id="4697"/>
<dbReference type="VEuPathDB" id="HostDB:ENSMMUG00000020894"/>
<dbReference type="VGNC" id="VGNC:108424">
    <property type="gene designation" value="NDUFA4"/>
</dbReference>
<dbReference type="eggNOG" id="ENOG502S65P">
    <property type="taxonomic scope" value="Eukaryota"/>
</dbReference>
<dbReference type="GeneTree" id="ENSGT00940000154268"/>
<dbReference type="HOGENOM" id="CLU_181002_0_0_1"/>
<dbReference type="InParanoid" id="Q3YAJ5"/>
<dbReference type="OMA" id="GPNQYKF"/>
<dbReference type="OrthoDB" id="5511684at2759"/>
<dbReference type="TreeFam" id="TF106383"/>
<dbReference type="Proteomes" id="UP000006718">
    <property type="component" value="Chromosome 3"/>
</dbReference>
<dbReference type="Bgee" id="ENSMMUG00000020894">
    <property type="expression patterns" value="Expressed in ileum and 21 other cell types or tissues"/>
</dbReference>
<dbReference type="ExpressionAtlas" id="Q3YAJ5">
    <property type="expression patterns" value="baseline and differential"/>
</dbReference>
<dbReference type="GO" id="GO:0005743">
    <property type="term" value="C:mitochondrial inner membrane"/>
    <property type="evidence" value="ECO:0007669"/>
    <property type="project" value="UniProtKB-SubCell"/>
</dbReference>
<dbReference type="GO" id="GO:0045277">
    <property type="term" value="C:respiratory chain complex IV"/>
    <property type="evidence" value="ECO:0000250"/>
    <property type="project" value="UniProtKB"/>
</dbReference>
<dbReference type="GO" id="GO:0044877">
    <property type="term" value="F:protein-containing complex binding"/>
    <property type="evidence" value="ECO:0007669"/>
    <property type="project" value="Ensembl"/>
</dbReference>
<dbReference type="InterPro" id="IPR010530">
    <property type="entry name" value="B12D"/>
</dbReference>
<dbReference type="PANTHER" id="PTHR14256:SF4">
    <property type="entry name" value="CYTOCHROME C OXIDASE SUBUNIT NDUFA4"/>
    <property type="match status" value="1"/>
</dbReference>
<dbReference type="PANTHER" id="PTHR14256">
    <property type="entry name" value="NADH-UBIQUINONE OXIDOREDUCTASE MLRQ SUBUNIT"/>
    <property type="match status" value="1"/>
</dbReference>
<dbReference type="Pfam" id="PF06522">
    <property type="entry name" value="B12D"/>
    <property type="match status" value="1"/>
</dbReference>
<name>NDUA4_MACMU</name>
<feature type="chain" id="PRO_0000232766" description="Cytochrome c oxidase subunit NDUFA4">
    <location>
        <begin position="1"/>
        <end position="81"/>
    </location>
</feature>
<feature type="topological domain" description="Mitochondrial matrix" evidence="1">
    <location>
        <begin position="1"/>
        <end position="14"/>
    </location>
</feature>
<feature type="transmembrane region" description="Helical" evidence="1">
    <location>
        <begin position="15"/>
        <end position="37"/>
    </location>
</feature>
<feature type="topological domain" description="Mitochondrial intermembrane" evidence="1">
    <location>
        <begin position="38"/>
        <end position="81"/>
    </location>
</feature>
<feature type="modified residue" description="N6-acetyllysine" evidence="2">
    <location>
        <position position="10"/>
    </location>
</feature>
<feature type="modified residue" description="Phosphoserine" evidence="1">
    <location>
        <position position="66"/>
    </location>
</feature>
<sequence>MLRHILGLAKKHPSLIPLFVFLGTGATGATLYLLRLALFSPDVCWDRNNPEPWNKLGPNDQYKFYSVNVDYDKLKKERPDF</sequence>
<comment type="function">
    <text evidence="1">Component of the cytochrome c oxidase, the last enzyme in the mitochondrial electron transport chain which drives oxidative phosphorylation. The respiratory chain contains 3 multisubunit complexes succinate dehydrogenase (complex II, CII), ubiquinol-cytochrome c oxidoreductase (cytochrome b-c1 complex, complex III, CIII) and cytochrome c oxidase (complex IV, CIV), that cooperate to transfer electrons derived from NADH and succinate to molecular oxygen, creating an electrochemical gradient over the inner membrane that drives transmembrane transport and the ATP synthase. Cytochrome c oxidase is the component of the respiratory chain that catalyzes the reduction of oxygen to water. Electrons originating from reduced cytochrome c in the intermembrane space (IMS) are transferred via the dinuclear copper A center (CU(A)) of subunit 2 and heme A of subunit 1 to the active site in subunit 1, a binuclear center (BNC) formed by heme A3 and copper B (CU(B)). The BNC reduces molecular oxygen to 2 water molecules unsing 4 electrons from cytochrome c in the IMS and 4 protons from the mitochondrial matrix. NDUFA4 is required for complex IV maintenance.</text>
</comment>
<comment type="subunit">
    <text evidence="1 2">Component of the cytochrome c oxidase (complex IV, CIV), a multisubunit enzyme composed of 14 subunits. The complex is composed of a catalytic core of 3 subunits MT-CO1, MT-CO2 and MT-CO3, encoded in the mitochondrial DNA, and 11 supernumerary subunits COX4I, COX5A, COX5B, COX6A, COX6B, COX6C, COX7A, COX7B, COX7C, COX8 and NDUFA4, which are encoded in the nuclear genome. The complex exists as a monomer or a dimer and forms supercomplexes (SCs) in the inner mitochondrial membrane with NADH-ubiquinone oxidoreductase (complex I, CI) and ubiquinol-cytochrome c oxidoreductase (cytochrome b-c1 complex, complex III, CIII), resulting in different assemblies (supercomplex SCI(1)III(2)IV(1) and megacomplex MCI(2)III(2)IV(2)) (By similarity). Interacts with RAB5IF (By similarity). Interacts with FLVCR2; this interaction occurs in the absence of heme and is disrupted upon heme binding.</text>
</comment>
<comment type="subcellular location">
    <subcellularLocation>
        <location evidence="1">Mitochondrion inner membrane</location>
        <topology evidence="1">Single-pass membrane protein</topology>
    </subcellularLocation>
</comment>
<comment type="similarity">
    <text evidence="3">Belongs to the complex IV NDUFA4 subunit family.</text>
</comment>
<keyword id="KW-0007">Acetylation</keyword>
<keyword id="KW-0249">Electron transport</keyword>
<keyword id="KW-0472">Membrane</keyword>
<keyword id="KW-0496">Mitochondrion</keyword>
<keyword id="KW-0999">Mitochondrion inner membrane</keyword>
<keyword id="KW-0597">Phosphoprotein</keyword>
<keyword id="KW-1185">Reference proteome</keyword>
<keyword id="KW-0679">Respiratory chain</keyword>
<keyword id="KW-0812">Transmembrane</keyword>
<keyword id="KW-1133">Transmembrane helix</keyword>
<keyword id="KW-0813">Transport</keyword>
<organism>
    <name type="scientific">Macaca mulatta</name>
    <name type="common">Rhesus macaque</name>
    <dbReference type="NCBI Taxonomy" id="9544"/>
    <lineage>
        <taxon>Eukaryota</taxon>
        <taxon>Metazoa</taxon>
        <taxon>Chordata</taxon>
        <taxon>Craniata</taxon>
        <taxon>Vertebrata</taxon>
        <taxon>Euteleostomi</taxon>
        <taxon>Mammalia</taxon>
        <taxon>Eutheria</taxon>
        <taxon>Euarchontoglires</taxon>
        <taxon>Primates</taxon>
        <taxon>Haplorrhini</taxon>
        <taxon>Catarrhini</taxon>
        <taxon>Cercopithecidae</taxon>
        <taxon>Cercopithecinae</taxon>
        <taxon>Macaca</taxon>
    </lineage>
</organism>